<dbReference type="EMBL" id="CM002239">
    <property type="protein sequence ID" value="EAA33128.1"/>
    <property type="molecule type" value="Genomic_DNA"/>
</dbReference>
<dbReference type="RefSeq" id="XP_962364.1">
    <property type="nucleotide sequence ID" value="XM_957271.2"/>
</dbReference>
<dbReference type="SMR" id="Q7S9P4"/>
<dbReference type="FunCoup" id="Q7S9P4">
    <property type="interactions" value="1205"/>
</dbReference>
<dbReference type="STRING" id="367110.Q7S9P4"/>
<dbReference type="PaxDb" id="5141-EFNCRP00000006315"/>
<dbReference type="EnsemblFungi" id="EAA33128">
    <property type="protein sequence ID" value="EAA33128"/>
    <property type="gene ID" value="NCU06622"/>
</dbReference>
<dbReference type="GeneID" id="3878512"/>
<dbReference type="KEGG" id="ncr:NCU06622"/>
<dbReference type="VEuPathDB" id="FungiDB:NCU06622"/>
<dbReference type="HOGENOM" id="CLU_061027_1_0_1"/>
<dbReference type="InParanoid" id="Q7S9P4"/>
<dbReference type="OMA" id="PNYREYM"/>
<dbReference type="OrthoDB" id="433501at2759"/>
<dbReference type="Proteomes" id="UP000001805">
    <property type="component" value="Chromosome 4, Linkage Group IV"/>
</dbReference>
<dbReference type="GO" id="GO:0071014">
    <property type="term" value="C:post-mRNA release spliceosomal complex"/>
    <property type="evidence" value="ECO:0007669"/>
    <property type="project" value="EnsemblFungi"/>
</dbReference>
<dbReference type="GO" id="GO:0005686">
    <property type="term" value="C:U2 snRNP"/>
    <property type="evidence" value="ECO:0000318"/>
    <property type="project" value="GO_Central"/>
</dbReference>
<dbReference type="GO" id="GO:0030620">
    <property type="term" value="F:U2 snRNA binding"/>
    <property type="evidence" value="ECO:0000318"/>
    <property type="project" value="GO_Central"/>
</dbReference>
<dbReference type="GO" id="GO:0000398">
    <property type="term" value="P:mRNA splicing, via spliceosome"/>
    <property type="evidence" value="ECO:0000318"/>
    <property type="project" value="GO_Central"/>
</dbReference>
<dbReference type="FunFam" id="3.80.10.10:FF:000026">
    <property type="entry name" value="U2 small nuclear ribonucleoprotein A"/>
    <property type="match status" value="1"/>
</dbReference>
<dbReference type="Gene3D" id="3.80.10.10">
    <property type="entry name" value="Ribonuclease Inhibitor"/>
    <property type="match status" value="1"/>
</dbReference>
<dbReference type="InterPro" id="IPR001611">
    <property type="entry name" value="Leu-rich_rpt"/>
</dbReference>
<dbReference type="InterPro" id="IPR032675">
    <property type="entry name" value="LRR_dom_sf"/>
</dbReference>
<dbReference type="InterPro" id="IPR044640">
    <property type="entry name" value="RU2A"/>
</dbReference>
<dbReference type="PANTHER" id="PTHR10552">
    <property type="entry name" value="U2 SMALL NUCLEAR RIBONUCLEOPROTEIN A"/>
    <property type="match status" value="1"/>
</dbReference>
<dbReference type="PANTHER" id="PTHR10552:SF6">
    <property type="entry name" value="U2 SMALL NUCLEAR RIBONUCLEOPROTEIN A"/>
    <property type="match status" value="1"/>
</dbReference>
<dbReference type="Pfam" id="PF14580">
    <property type="entry name" value="LRR_9"/>
    <property type="match status" value="1"/>
</dbReference>
<dbReference type="SUPFAM" id="SSF52058">
    <property type="entry name" value="L domain-like"/>
    <property type="match status" value="1"/>
</dbReference>
<dbReference type="PROSITE" id="PS51450">
    <property type="entry name" value="LRR"/>
    <property type="match status" value="3"/>
</dbReference>
<proteinExistence type="inferred from homology"/>
<keyword id="KW-0433">Leucine-rich repeat</keyword>
<keyword id="KW-0507">mRNA processing</keyword>
<keyword id="KW-0508">mRNA splicing</keyword>
<keyword id="KW-0539">Nucleus</keyword>
<keyword id="KW-1185">Reference proteome</keyword>
<keyword id="KW-0677">Repeat</keyword>
<keyword id="KW-0747">Spliceosome</keyword>
<organism>
    <name type="scientific">Neurospora crassa (strain ATCC 24698 / 74-OR23-1A / CBS 708.71 / DSM 1257 / FGSC 987)</name>
    <dbReference type="NCBI Taxonomy" id="367110"/>
    <lineage>
        <taxon>Eukaryota</taxon>
        <taxon>Fungi</taxon>
        <taxon>Dikarya</taxon>
        <taxon>Ascomycota</taxon>
        <taxon>Pezizomycotina</taxon>
        <taxon>Sordariomycetes</taxon>
        <taxon>Sordariomycetidae</taxon>
        <taxon>Sordariales</taxon>
        <taxon>Sordariaceae</taxon>
        <taxon>Neurospora</taxon>
    </lineage>
</organism>
<sequence>MRLTADLINNSLSYLNPLKEREIDLRGHRIPAIENLGVAGPHDAIDFTDNDIQVLGNFPLSPRIRTLLLARNRIAQIQSTLPNATPNLKNLVLASNNIGELADLEVLGRFPRLTHLVLTDNPVTKKENYRYWVLWLCPQVRFLDYVKVKDAERQKAKELFGTADEPTELAKTIKGIKSKTFDVGASSANGAAGSGPSSKLSRLKLTEKEKKKLQDLIKKADSLEEIIRLEKALNEGRLPPGIIAEDDDAMEE</sequence>
<accession>Q7S9P4</accession>
<reference key="1">
    <citation type="journal article" date="2003" name="Nature">
        <title>The genome sequence of the filamentous fungus Neurospora crassa.</title>
        <authorList>
            <person name="Galagan J.E."/>
            <person name="Calvo S.E."/>
            <person name="Borkovich K.A."/>
            <person name="Selker E.U."/>
            <person name="Read N.D."/>
            <person name="Jaffe D.B."/>
            <person name="FitzHugh W."/>
            <person name="Ma L.-J."/>
            <person name="Smirnov S."/>
            <person name="Purcell S."/>
            <person name="Rehman B."/>
            <person name="Elkins T."/>
            <person name="Engels R."/>
            <person name="Wang S."/>
            <person name="Nielsen C.B."/>
            <person name="Butler J."/>
            <person name="Endrizzi M."/>
            <person name="Qui D."/>
            <person name="Ianakiev P."/>
            <person name="Bell-Pedersen D."/>
            <person name="Nelson M.A."/>
            <person name="Werner-Washburne M."/>
            <person name="Selitrennikoff C.P."/>
            <person name="Kinsey J.A."/>
            <person name="Braun E.L."/>
            <person name="Zelter A."/>
            <person name="Schulte U."/>
            <person name="Kothe G.O."/>
            <person name="Jedd G."/>
            <person name="Mewes H.-W."/>
            <person name="Staben C."/>
            <person name="Marcotte E."/>
            <person name="Greenberg D."/>
            <person name="Roy A."/>
            <person name="Foley K."/>
            <person name="Naylor J."/>
            <person name="Stange-Thomann N."/>
            <person name="Barrett R."/>
            <person name="Gnerre S."/>
            <person name="Kamal M."/>
            <person name="Kamvysselis M."/>
            <person name="Mauceli E.W."/>
            <person name="Bielke C."/>
            <person name="Rudd S."/>
            <person name="Frishman D."/>
            <person name="Krystofova S."/>
            <person name="Rasmussen C."/>
            <person name="Metzenberg R.L."/>
            <person name="Perkins D.D."/>
            <person name="Kroken S."/>
            <person name="Cogoni C."/>
            <person name="Macino G."/>
            <person name="Catcheside D.E.A."/>
            <person name="Li W."/>
            <person name="Pratt R.J."/>
            <person name="Osmani S.A."/>
            <person name="DeSouza C.P.C."/>
            <person name="Glass N.L."/>
            <person name="Orbach M.J."/>
            <person name="Berglund J.A."/>
            <person name="Voelker R."/>
            <person name="Yarden O."/>
            <person name="Plamann M."/>
            <person name="Seiler S."/>
            <person name="Dunlap J.C."/>
            <person name="Radford A."/>
            <person name="Aramayo R."/>
            <person name="Natvig D.O."/>
            <person name="Alex L.A."/>
            <person name="Mannhaupt G."/>
            <person name="Ebbole D.J."/>
            <person name="Freitag M."/>
            <person name="Paulsen I."/>
            <person name="Sachs M.S."/>
            <person name="Lander E.S."/>
            <person name="Nusbaum C."/>
            <person name="Birren B.W."/>
        </authorList>
    </citation>
    <scope>NUCLEOTIDE SEQUENCE [LARGE SCALE GENOMIC DNA]</scope>
    <source>
        <strain>ATCC 24698 / 74-OR23-1A / CBS 708.71 / DSM 1257 / FGSC 987</strain>
    </source>
</reference>
<feature type="chain" id="PRO_0000074185" description="U2 small nuclear ribonucleoprotein A'">
    <location>
        <begin position="1"/>
        <end position="252"/>
    </location>
</feature>
<feature type="repeat" description="LRR 1">
    <location>
        <begin position="41"/>
        <end position="62"/>
    </location>
</feature>
<feature type="repeat" description="LRR 2">
    <location>
        <begin position="63"/>
        <end position="84"/>
    </location>
</feature>
<feature type="repeat" description="LRR 3">
    <location>
        <begin position="87"/>
        <end position="108"/>
    </location>
</feature>
<feature type="domain" description="LRRCT">
    <location>
        <begin position="121"/>
        <end position="159"/>
    </location>
</feature>
<gene>
    <name type="primary">lea-1</name>
    <name type="ORF">NCU06622</name>
</gene>
<protein>
    <recommendedName>
        <fullName>U2 small nuclear ribonucleoprotein A'</fullName>
        <shortName>U2 snRNP A'</shortName>
    </recommendedName>
</protein>
<evidence type="ECO:0000250" key="1"/>
<evidence type="ECO:0000305" key="2"/>
<comment type="function">
    <text evidence="1">Involved in pre-mRNA splicing.</text>
</comment>
<comment type="subunit">
    <text evidence="1">Associated with the spliceosome.</text>
</comment>
<comment type="subcellular location">
    <subcellularLocation>
        <location evidence="1">Nucleus</location>
    </subcellularLocation>
</comment>
<comment type="similarity">
    <text evidence="2">Belongs to the U2 small nuclear ribonucleoprotein A family.</text>
</comment>
<name>RU2A_NEUCR</name>